<name>CARB_METBA</name>
<evidence type="ECO:0000255" key="1">
    <source>
        <dbReference type="HAMAP-Rule" id="MF_01210"/>
    </source>
</evidence>
<evidence type="ECO:0000305" key="2"/>
<protein>
    <recommendedName>
        <fullName evidence="1">Carbamoyl phosphate synthase large chain</fullName>
        <ecNumber evidence="1">6.3.4.16</ecNumber>
        <ecNumber evidence="1">6.3.5.5</ecNumber>
    </recommendedName>
    <alternativeName>
        <fullName evidence="1">Carbamoyl phosphate synthetase ammonia chain</fullName>
    </alternativeName>
</protein>
<feature type="chain" id="PRO_0000145074" description="Carbamoyl phosphate synthase large chain">
    <location>
        <begin position="1" status="less than"/>
        <end position="398"/>
    </location>
</feature>
<feature type="domain" description="ATP-grasp" evidence="1">
    <location>
        <begin position="1" status="less than"/>
        <end position="187"/>
    </location>
</feature>
<feature type="domain" description="MGS-like" evidence="1">
    <location>
        <begin position="254"/>
        <end position="395"/>
    </location>
</feature>
<feature type="region of interest" description="Carbamoyl phosphate synthetic domain" evidence="1">
    <location>
        <begin position="1" status="less than"/>
        <end position="255"/>
    </location>
</feature>
<feature type="region of interest" description="Allosteric domain" evidence="1">
    <location>
        <begin position="256"/>
        <end position="398"/>
    </location>
</feature>
<feature type="binding site" evidence="1">
    <location>
        <position position="32"/>
    </location>
    <ligand>
        <name>ATP</name>
        <dbReference type="ChEBI" id="CHEBI:30616"/>
        <label>1</label>
    </ligand>
</feature>
<feature type="binding site" evidence="1">
    <location>
        <position position="71"/>
    </location>
    <ligand>
        <name>ATP</name>
        <dbReference type="ChEBI" id="CHEBI:30616"/>
        <label>1</label>
    </ligand>
</feature>
<feature type="binding site" evidence="1">
    <location>
        <position position="73"/>
    </location>
    <ligand>
        <name>ATP</name>
        <dbReference type="ChEBI" id="CHEBI:30616"/>
        <label>1</label>
    </ligand>
</feature>
<feature type="binding site" evidence="1">
    <location>
        <position position="78"/>
    </location>
    <ligand>
        <name>ATP</name>
        <dbReference type="ChEBI" id="CHEBI:30616"/>
        <label>1</label>
    </ligand>
</feature>
<feature type="binding site" evidence="1">
    <location>
        <position position="103"/>
    </location>
    <ligand>
        <name>ATP</name>
        <dbReference type="ChEBI" id="CHEBI:30616"/>
        <label>1</label>
    </ligand>
</feature>
<feature type="binding site" evidence="1">
    <location>
        <position position="104"/>
    </location>
    <ligand>
        <name>ATP</name>
        <dbReference type="ChEBI" id="CHEBI:30616"/>
        <label>1</label>
    </ligand>
</feature>
<feature type="binding site" evidence="1">
    <location>
        <position position="105"/>
    </location>
    <ligand>
        <name>ATP</name>
        <dbReference type="ChEBI" id="CHEBI:30616"/>
        <label>1</label>
    </ligand>
</feature>
<feature type="binding site" evidence="1">
    <location>
        <position position="106"/>
    </location>
    <ligand>
        <name>ATP</name>
        <dbReference type="ChEBI" id="CHEBI:30616"/>
        <label>1</label>
    </ligand>
</feature>
<feature type="binding site" evidence="1">
    <location>
        <position position="146"/>
    </location>
    <ligand>
        <name>ATP</name>
        <dbReference type="ChEBI" id="CHEBI:30616"/>
        <label>1</label>
    </ligand>
</feature>
<feature type="binding site" evidence="1">
    <location>
        <position position="146"/>
    </location>
    <ligand>
        <name>Mg(2+)</name>
        <dbReference type="ChEBI" id="CHEBI:18420"/>
        <label>1</label>
    </ligand>
</feature>
<feature type="binding site" evidence="1">
    <location>
        <position position="146"/>
    </location>
    <ligand>
        <name>Mn(2+)</name>
        <dbReference type="ChEBI" id="CHEBI:29035"/>
        <label>1</label>
    </ligand>
</feature>
<feature type="binding site" evidence="1">
    <location>
        <position position="158"/>
    </location>
    <ligand>
        <name>ATP</name>
        <dbReference type="ChEBI" id="CHEBI:30616"/>
        <label>1</label>
    </ligand>
</feature>
<feature type="binding site" evidence="1">
    <location>
        <position position="158"/>
    </location>
    <ligand>
        <name>Mg(2+)</name>
        <dbReference type="ChEBI" id="CHEBI:18420"/>
        <label>1</label>
    </ligand>
</feature>
<feature type="binding site" evidence="1">
    <location>
        <position position="158"/>
    </location>
    <ligand>
        <name>Mg(2+)</name>
        <dbReference type="ChEBI" id="CHEBI:18420"/>
        <label>2</label>
    </ligand>
</feature>
<feature type="binding site" evidence="1">
    <location>
        <position position="158"/>
    </location>
    <ligand>
        <name>Mn(2+)</name>
        <dbReference type="ChEBI" id="CHEBI:29035"/>
        <label>1</label>
    </ligand>
</feature>
<feature type="binding site" evidence="1">
    <location>
        <position position="158"/>
    </location>
    <ligand>
        <name>Mn(2+)</name>
        <dbReference type="ChEBI" id="CHEBI:29035"/>
        <label>2</label>
    </ligand>
</feature>
<feature type="binding site" evidence="1">
    <location>
        <position position="160"/>
    </location>
    <ligand>
        <name>Mg(2+)</name>
        <dbReference type="ChEBI" id="CHEBI:18420"/>
        <label>2</label>
    </ligand>
</feature>
<feature type="binding site" evidence="1">
    <location>
        <position position="160"/>
    </location>
    <ligand>
        <name>Mn(2+)</name>
        <dbReference type="ChEBI" id="CHEBI:29035"/>
        <label>2</label>
    </ligand>
</feature>
<feature type="non-terminal residue">
    <location>
        <position position="1"/>
    </location>
</feature>
<reference key="1">
    <citation type="journal article" date="1988" name="J. Bacteriol.">
        <title>Conservation of structure in the human gene encoding argininosuccinate synthetase and the argG genes of the archaebacteria Methanosarcina barkeri MS and Methanococcus vannielii.</title>
        <authorList>
            <person name="Morris C.J."/>
            <person name="Reeve J.N."/>
        </authorList>
    </citation>
    <scope>NUCLEOTIDE SEQUENCE [GENOMIC DNA]</scope>
    <source>
        <strain>ATCC 43569 / MS / DSM 800 / JCM 10043 / NBRC 100474</strain>
    </source>
</reference>
<accession>P13258</accession>
<gene>
    <name evidence="1" type="primary">carB</name>
</gene>
<keyword id="KW-0028">Amino-acid biosynthesis</keyword>
<keyword id="KW-0055">Arginine biosynthesis</keyword>
<keyword id="KW-0067">ATP-binding</keyword>
<keyword id="KW-0436">Ligase</keyword>
<keyword id="KW-0460">Magnesium</keyword>
<keyword id="KW-0464">Manganese</keyword>
<keyword id="KW-0479">Metal-binding</keyword>
<keyword id="KW-0547">Nucleotide-binding</keyword>
<keyword id="KW-0665">Pyrimidine biosynthesis</keyword>
<keyword id="KW-0677">Repeat</keyword>
<sequence length="398" mass="43692">KLGVPQPEGGYATSQKEAIEVAKRIGFPVLVRPSYVLGGRAMEIVYDEMDLERYMKEAVRVSHEHPILIDDFLEAASEIDVDAVCDQKDVIIGAIMEHIEEAGVHSGDSACVIPPQSLSPEVLDQVRDYTRKIALALRVKGLINIQMAEKGGKVYVLEANPRSSRTIPFVSKAVGIPLAKIAAKVIVGHSLKSLGYMDEPKPKHVSIKEVLLPFDKLPGADPVLGPEMKSTGEVMGIDYDFGRAYYKAELAADNVLPLTGKVFLSIRNADKTELVDVAKKLQAAGLELMGTEGTVNYLAQHGVFMDVVKKVHDGSPNVIDMMRRDEVNLIINTPTSKQSRRDGSRIRRAAVDFKVPYITTMQAAIAAAAAIETMKKGEELTIKSINEYHKEMEEENKV</sequence>
<organism>
    <name type="scientific">Methanosarcina barkeri</name>
    <dbReference type="NCBI Taxonomy" id="2208"/>
    <lineage>
        <taxon>Archaea</taxon>
        <taxon>Methanobacteriati</taxon>
        <taxon>Methanobacteriota</taxon>
        <taxon>Stenosarchaea group</taxon>
        <taxon>Methanomicrobia</taxon>
        <taxon>Methanosarcinales</taxon>
        <taxon>Methanosarcinaceae</taxon>
        <taxon>Methanosarcina</taxon>
    </lineage>
</organism>
<dbReference type="EC" id="6.3.4.16" evidence="1"/>
<dbReference type="EC" id="6.3.5.5" evidence="1"/>
<dbReference type="EMBL" id="M21314">
    <property type="protein sequence ID" value="AAA72676.1"/>
    <property type="molecule type" value="Genomic_DNA"/>
</dbReference>
<dbReference type="PIR" id="A28180">
    <property type="entry name" value="A28180"/>
</dbReference>
<dbReference type="SMR" id="P13258"/>
<dbReference type="UniPathway" id="UPA00068">
    <property type="reaction ID" value="UER00171"/>
</dbReference>
<dbReference type="UniPathway" id="UPA00070">
    <property type="reaction ID" value="UER00115"/>
</dbReference>
<dbReference type="GO" id="GO:0005737">
    <property type="term" value="C:cytoplasm"/>
    <property type="evidence" value="ECO:0007669"/>
    <property type="project" value="TreeGrafter"/>
</dbReference>
<dbReference type="GO" id="GO:0005524">
    <property type="term" value="F:ATP binding"/>
    <property type="evidence" value="ECO:0007669"/>
    <property type="project" value="UniProtKB-KW"/>
</dbReference>
<dbReference type="GO" id="GO:0004087">
    <property type="term" value="F:carbamoyl-phosphate synthase (ammonia) activity"/>
    <property type="evidence" value="ECO:0007669"/>
    <property type="project" value="RHEA"/>
</dbReference>
<dbReference type="GO" id="GO:0004088">
    <property type="term" value="F:carbamoyl-phosphate synthase (glutamine-hydrolyzing) activity"/>
    <property type="evidence" value="ECO:0007669"/>
    <property type="project" value="UniProtKB-EC"/>
</dbReference>
<dbReference type="GO" id="GO:0046872">
    <property type="term" value="F:metal ion binding"/>
    <property type="evidence" value="ECO:0007669"/>
    <property type="project" value="UniProtKB-KW"/>
</dbReference>
<dbReference type="GO" id="GO:0044205">
    <property type="term" value="P:'de novo' UMP biosynthetic process"/>
    <property type="evidence" value="ECO:0007669"/>
    <property type="project" value="UniProtKB-UniPathway"/>
</dbReference>
<dbReference type="GO" id="GO:0006541">
    <property type="term" value="P:glutamine metabolic process"/>
    <property type="evidence" value="ECO:0007669"/>
    <property type="project" value="TreeGrafter"/>
</dbReference>
<dbReference type="GO" id="GO:0006526">
    <property type="term" value="P:L-arginine biosynthetic process"/>
    <property type="evidence" value="ECO:0007669"/>
    <property type="project" value="UniProtKB-UniPathway"/>
</dbReference>
<dbReference type="CDD" id="cd01424">
    <property type="entry name" value="MGS_CPS_II"/>
    <property type="match status" value="1"/>
</dbReference>
<dbReference type="FunFam" id="3.30.1490.20:FF:000001">
    <property type="entry name" value="Carbamoyl-phosphate synthase large chain"/>
    <property type="match status" value="1"/>
</dbReference>
<dbReference type="FunFam" id="3.30.470.20:FF:000013">
    <property type="entry name" value="Carbamoyl-phosphate synthase large chain"/>
    <property type="match status" value="1"/>
</dbReference>
<dbReference type="Gene3D" id="3.30.470.20">
    <property type="entry name" value="ATP-grasp fold, B domain"/>
    <property type="match status" value="1"/>
</dbReference>
<dbReference type="Gene3D" id="3.40.50.1380">
    <property type="entry name" value="Methylglyoxal synthase-like domain"/>
    <property type="match status" value="1"/>
</dbReference>
<dbReference type="InterPro" id="IPR011761">
    <property type="entry name" value="ATP-grasp"/>
</dbReference>
<dbReference type="InterPro" id="IPR005479">
    <property type="entry name" value="CbamoylP_synth_lsu-like_ATP-bd"/>
</dbReference>
<dbReference type="InterPro" id="IPR005483">
    <property type="entry name" value="CbamoylP_synth_lsu_CPSase_dom"/>
</dbReference>
<dbReference type="InterPro" id="IPR011607">
    <property type="entry name" value="MGS-like_dom"/>
</dbReference>
<dbReference type="InterPro" id="IPR036914">
    <property type="entry name" value="MGS-like_dom_sf"/>
</dbReference>
<dbReference type="InterPro" id="IPR033937">
    <property type="entry name" value="MGS_CPS_CarB"/>
</dbReference>
<dbReference type="PANTHER" id="PTHR11405:SF53">
    <property type="entry name" value="CARBAMOYL-PHOSPHATE SYNTHASE [AMMONIA], MITOCHONDRIAL"/>
    <property type="match status" value="1"/>
</dbReference>
<dbReference type="PANTHER" id="PTHR11405">
    <property type="entry name" value="CARBAMOYLTRANSFERASE FAMILY MEMBER"/>
    <property type="match status" value="1"/>
</dbReference>
<dbReference type="Pfam" id="PF02786">
    <property type="entry name" value="CPSase_L_D2"/>
    <property type="match status" value="1"/>
</dbReference>
<dbReference type="Pfam" id="PF02142">
    <property type="entry name" value="MGS"/>
    <property type="match status" value="1"/>
</dbReference>
<dbReference type="PRINTS" id="PR00098">
    <property type="entry name" value="CPSASE"/>
</dbReference>
<dbReference type="SMART" id="SM00851">
    <property type="entry name" value="MGS"/>
    <property type="match status" value="1"/>
</dbReference>
<dbReference type="SUPFAM" id="SSF56059">
    <property type="entry name" value="Glutathione synthetase ATP-binding domain-like"/>
    <property type="match status" value="1"/>
</dbReference>
<dbReference type="SUPFAM" id="SSF52335">
    <property type="entry name" value="Methylglyoxal synthase-like"/>
    <property type="match status" value="1"/>
</dbReference>
<dbReference type="PROSITE" id="PS50975">
    <property type="entry name" value="ATP_GRASP"/>
    <property type="match status" value="1"/>
</dbReference>
<dbReference type="PROSITE" id="PS00866">
    <property type="entry name" value="CPSASE_1"/>
    <property type="match status" value="1"/>
</dbReference>
<dbReference type="PROSITE" id="PS00867">
    <property type="entry name" value="CPSASE_2"/>
    <property type="match status" value="1"/>
</dbReference>
<dbReference type="PROSITE" id="PS51855">
    <property type="entry name" value="MGS"/>
    <property type="match status" value="1"/>
</dbReference>
<proteinExistence type="inferred from homology"/>
<comment type="function">
    <text evidence="1">Large subunit of the glutamine-dependent carbamoyl phosphate synthetase (CPSase). CPSase catalyzes the formation of carbamoyl phosphate from the ammonia moiety of glutamine, carbonate, and phosphate donated by ATP, constituting the first step of 2 biosynthetic pathways, one leading to arginine and/or urea and the other to pyrimidine nucleotides. The large subunit (synthetase) binds the substrates ammonia (free or transferred from glutamine from the small subunit), hydrogencarbonate and ATP and carries out an ATP-coupled ligase reaction, activating hydrogencarbonate by forming carboxy phosphate which reacts with ammonia to form carbamoyl phosphate.</text>
</comment>
<comment type="catalytic activity">
    <reaction evidence="1">
        <text>hydrogencarbonate + L-glutamine + 2 ATP + H2O = carbamoyl phosphate + L-glutamate + 2 ADP + phosphate + 2 H(+)</text>
        <dbReference type="Rhea" id="RHEA:18633"/>
        <dbReference type="ChEBI" id="CHEBI:15377"/>
        <dbReference type="ChEBI" id="CHEBI:15378"/>
        <dbReference type="ChEBI" id="CHEBI:17544"/>
        <dbReference type="ChEBI" id="CHEBI:29985"/>
        <dbReference type="ChEBI" id="CHEBI:30616"/>
        <dbReference type="ChEBI" id="CHEBI:43474"/>
        <dbReference type="ChEBI" id="CHEBI:58228"/>
        <dbReference type="ChEBI" id="CHEBI:58359"/>
        <dbReference type="ChEBI" id="CHEBI:456216"/>
        <dbReference type="EC" id="6.3.5.5"/>
    </reaction>
</comment>
<comment type="catalytic activity">
    <molecule>Carbamoyl phosphate synthase large chain</molecule>
    <reaction evidence="1">
        <text>hydrogencarbonate + NH4(+) + 2 ATP = carbamoyl phosphate + 2 ADP + phosphate + 2 H(+)</text>
        <dbReference type="Rhea" id="RHEA:18029"/>
        <dbReference type="ChEBI" id="CHEBI:15378"/>
        <dbReference type="ChEBI" id="CHEBI:17544"/>
        <dbReference type="ChEBI" id="CHEBI:28938"/>
        <dbReference type="ChEBI" id="CHEBI:30616"/>
        <dbReference type="ChEBI" id="CHEBI:43474"/>
        <dbReference type="ChEBI" id="CHEBI:58228"/>
        <dbReference type="ChEBI" id="CHEBI:456216"/>
        <dbReference type="EC" id="6.3.4.16"/>
    </reaction>
</comment>
<comment type="cofactor">
    <cofactor evidence="1">
        <name>Mg(2+)</name>
        <dbReference type="ChEBI" id="CHEBI:18420"/>
    </cofactor>
    <cofactor evidence="1">
        <name>Mn(2+)</name>
        <dbReference type="ChEBI" id="CHEBI:29035"/>
    </cofactor>
    <text evidence="1">Binds 4 Mg(2+) or Mn(2+) ions per subunit.</text>
</comment>
<comment type="pathway">
    <text evidence="1">Amino-acid biosynthesis; L-arginine biosynthesis; carbamoyl phosphate from bicarbonate: step 1/1.</text>
</comment>
<comment type="pathway">
    <text evidence="1">Pyrimidine metabolism; UMP biosynthesis via de novo pathway; (S)-dihydroorotate from bicarbonate: step 1/3.</text>
</comment>
<comment type="subunit">
    <text evidence="1">Composed of two chains; the small (or glutamine) chain promotes the hydrolysis of glutamine to ammonia, which is used by the large (or ammonia) chain to synthesize carbamoyl phosphate. Tetramer of heterodimers (alpha,beta)4.</text>
</comment>
<comment type="domain">
    <text evidence="1">The large subunit is composed of 2 ATP-grasp domains that are involved in binding the 2 ATP molecules needed for carbamoyl phosphate synthesis. The N-terminal ATP-grasp domain (referred to as the carboxyphosphate synthetic component) catalyzes the ATP-dependent phosphorylation of hydrogencarbonate to carboxyphosphate and the subsequent nucleophilic attack by ammonia to form a carbamate intermediate. The C-terminal ATP-grasp domain (referred to as the carbamoyl phosphate synthetic component) then catalyzes the phosphorylation of carbamate with the second ATP to form the end product carbamoyl phosphate. The reactive and unstable enzyme intermediates are sequentially channeled from one active site to the next through the interior of the protein over a distance of at least 96 A.</text>
</comment>
<comment type="similarity">
    <text evidence="1 2">Belongs to the CarB family.</text>
</comment>